<organism>
    <name type="scientific">Salmonella typhimurium (strain LT2 / SGSC1412 / ATCC 700720)</name>
    <dbReference type="NCBI Taxonomy" id="99287"/>
    <lineage>
        <taxon>Bacteria</taxon>
        <taxon>Pseudomonadati</taxon>
        <taxon>Pseudomonadota</taxon>
        <taxon>Gammaproteobacteria</taxon>
        <taxon>Enterobacterales</taxon>
        <taxon>Enterobacteriaceae</taxon>
        <taxon>Salmonella</taxon>
    </lineage>
</organism>
<name>VAPB_SALTY</name>
<protein>
    <recommendedName>
        <fullName>Antitoxin VapB</fullName>
    </recommendedName>
</protein>
<evidence type="ECO:0000255" key="1">
    <source>
        <dbReference type="PROSITE-ProRule" id="PRU01076"/>
    </source>
</evidence>
<evidence type="ECO:0000269" key="2">
    <source>
    </source>
</evidence>
<evidence type="ECO:0000269" key="3">
    <source>
    </source>
</evidence>
<evidence type="ECO:0000305" key="4"/>
<evidence type="ECO:0007829" key="5">
    <source>
        <dbReference type="PDB" id="6IFM"/>
    </source>
</evidence>
<comment type="function">
    <text evidence="2 3">Antitoxin component of a type II toxin-antitoxin (TA) system. Upon expression in E.coli neutralizes the effect of cognate toxin VapC.</text>
</comment>
<comment type="subunit">
    <text evidence="4">Forms a complex with toxin VapC.</text>
</comment>
<comment type="induction">
    <text evidence="2">Induced by amino acid starvation and by chloramphenicol treatment.</text>
</comment>
<comment type="similarity">
    <text evidence="4">Belongs to the VapB family.</text>
</comment>
<accession>Q7CPV2</accession>
<keyword id="KW-0002">3D-structure</keyword>
<keyword id="KW-0238">DNA-binding</keyword>
<keyword id="KW-1185">Reference proteome</keyword>
<keyword id="KW-1277">Toxin-antitoxin system</keyword>
<reference key="1">
    <citation type="journal article" date="2001" name="Nature">
        <title>Complete genome sequence of Salmonella enterica serovar Typhimurium LT2.</title>
        <authorList>
            <person name="McClelland M."/>
            <person name="Sanderson K.E."/>
            <person name="Spieth J."/>
            <person name="Clifton S.W."/>
            <person name="Latreille P."/>
            <person name="Courtney L."/>
            <person name="Porwollik S."/>
            <person name="Ali J."/>
            <person name="Dante M."/>
            <person name="Du F."/>
            <person name="Hou S."/>
            <person name="Layman D."/>
            <person name="Leonard S."/>
            <person name="Nguyen C."/>
            <person name="Scott K."/>
            <person name="Holmes A."/>
            <person name="Grewal N."/>
            <person name="Mulvaney E."/>
            <person name="Ryan E."/>
            <person name="Sun H."/>
            <person name="Florea L."/>
            <person name="Miller W."/>
            <person name="Stoneking T."/>
            <person name="Nhan M."/>
            <person name="Waterston R."/>
            <person name="Wilson R.K."/>
        </authorList>
    </citation>
    <scope>NUCLEOTIDE SEQUENCE [LARGE SCALE GENOMIC DNA]</scope>
    <source>
        <strain>LT2 / SGSC1412 / ATCC 700720</strain>
    </source>
</reference>
<reference key="2">
    <citation type="journal article" date="2009" name="Mol. Microbiol.">
        <title>Ectopic production of VapCs from Enterobacteria inhibits translation and trans-activates YoeB mRNA interferase.</title>
        <authorList>
            <person name="Winther K.S."/>
            <person name="Gerdes K."/>
        </authorList>
    </citation>
    <scope>FUNCTION AS AN ANTITOXIN</scope>
    <scope>INDUCTION</scope>
    <source>
        <strain>LT2 / SGSC1412 / ATCC 700720</strain>
    </source>
</reference>
<reference key="3">
    <citation type="journal article" date="2011" name="Proc. Natl. Acad. Sci. U.S.A.">
        <title>Enteric virulence associated protein VapC inhibits translation by cleavage of initiator tRNA.</title>
        <authorList>
            <person name="Winther K.S."/>
            <person name="Gerdes K."/>
        </authorList>
    </citation>
    <scope>FUNCTION AS AN ANTITOXIN</scope>
    <source>
        <strain>LT2 / SGSC1412 / ATCC 700720</strain>
    </source>
</reference>
<sequence>MHTTLFFSNRTQAVRLPKSISFPEDVKHVEIIAVGRSRIITPVGESWDSWFDGEGASTDFMSTREQPAVQEREGF</sequence>
<dbReference type="EMBL" id="AE006468">
    <property type="protein sequence ID" value="AAL21910.1"/>
    <property type="molecule type" value="Genomic_DNA"/>
</dbReference>
<dbReference type="RefSeq" id="NP_461951.1">
    <property type="nucleotide sequence ID" value="NC_003197.2"/>
</dbReference>
<dbReference type="RefSeq" id="WP_000557549.1">
    <property type="nucleotide sequence ID" value="NC_003197.2"/>
</dbReference>
<dbReference type="PDB" id="6IFM">
    <property type="method" value="X-ray"/>
    <property type="resolution" value="2.80 A"/>
    <property type="chains" value="B/D/F/H=1-68"/>
</dbReference>
<dbReference type="PDBsum" id="6IFM"/>
<dbReference type="SMR" id="Q7CPV2"/>
<dbReference type="STRING" id="99287.STM3034"/>
<dbReference type="PaxDb" id="99287-STM3034"/>
<dbReference type="GeneID" id="1254557"/>
<dbReference type="KEGG" id="stm:STM3034"/>
<dbReference type="PATRIC" id="fig|99287.12.peg.3212"/>
<dbReference type="HOGENOM" id="CLU_162018_3_2_6"/>
<dbReference type="PhylomeDB" id="Q7CPV2"/>
<dbReference type="BioCyc" id="SENT99287:STM3034-MONOMER"/>
<dbReference type="Proteomes" id="UP000001014">
    <property type="component" value="Chromosome"/>
</dbReference>
<dbReference type="GO" id="GO:0003677">
    <property type="term" value="F:DNA binding"/>
    <property type="evidence" value="ECO:0007669"/>
    <property type="project" value="UniProtKB-KW"/>
</dbReference>
<dbReference type="Gene3D" id="2.10.260.10">
    <property type="match status" value="1"/>
</dbReference>
<dbReference type="InterPro" id="IPR047976">
    <property type="entry name" value="Anti_VapB2-like"/>
</dbReference>
<dbReference type="InterPro" id="IPR007159">
    <property type="entry name" value="SpoVT-AbrB_dom"/>
</dbReference>
<dbReference type="InterPro" id="IPR037914">
    <property type="entry name" value="SpoVT-AbrB_sf"/>
</dbReference>
<dbReference type="InterPro" id="IPR051734">
    <property type="entry name" value="VapB_TA_antitoxins"/>
</dbReference>
<dbReference type="NCBIfam" id="NF040493">
    <property type="entry name" value="TA_anti_VapB"/>
    <property type="match status" value="1"/>
</dbReference>
<dbReference type="PANTHER" id="PTHR37550">
    <property type="entry name" value="ANTITOXIN VAPB1"/>
    <property type="match status" value="1"/>
</dbReference>
<dbReference type="PANTHER" id="PTHR37550:SF3">
    <property type="entry name" value="ANTITOXIN VAPB1"/>
    <property type="match status" value="1"/>
</dbReference>
<dbReference type="SUPFAM" id="SSF89447">
    <property type="entry name" value="AbrB/MazE/MraZ-like"/>
    <property type="match status" value="1"/>
</dbReference>
<dbReference type="PROSITE" id="PS51740">
    <property type="entry name" value="SPOVT_ABRB"/>
    <property type="match status" value="1"/>
</dbReference>
<proteinExistence type="evidence at protein level"/>
<feature type="chain" id="PRO_0000410982" description="Antitoxin VapB">
    <location>
        <begin position="1"/>
        <end position="75"/>
    </location>
</feature>
<feature type="domain" description="SpoVT-AbrB" evidence="1">
    <location>
        <begin position="3"/>
        <end position="45"/>
    </location>
</feature>
<feature type="strand" evidence="5">
    <location>
        <begin position="3"/>
        <end position="8"/>
    </location>
</feature>
<feature type="strand" evidence="5">
    <location>
        <begin position="11"/>
        <end position="16"/>
    </location>
</feature>
<feature type="strand" evidence="5">
    <location>
        <begin position="28"/>
        <end position="34"/>
    </location>
</feature>
<feature type="strand" evidence="5">
    <location>
        <begin position="37"/>
        <end position="42"/>
    </location>
</feature>
<feature type="helix" evidence="5">
    <location>
        <begin position="48"/>
        <end position="52"/>
    </location>
</feature>
<gene>
    <name type="primary">vapB</name>
    <name type="ordered locus">STM3034</name>
</gene>